<reference key="1">
    <citation type="journal article" date="2003" name="Proc. Natl. Acad. Sci. U.S.A.">
        <title>The complete genome sequence of Chromobacterium violaceum reveals remarkable and exploitable bacterial adaptability.</title>
        <authorList>
            <person name="Vasconcelos A.T.R."/>
            <person name="de Almeida D.F."/>
            <person name="Hungria M."/>
            <person name="Guimaraes C.T."/>
            <person name="Antonio R.V."/>
            <person name="Almeida F.C."/>
            <person name="de Almeida L.G.P."/>
            <person name="de Almeida R."/>
            <person name="Alves-Gomes J.A."/>
            <person name="Andrade E.M."/>
            <person name="Araripe J."/>
            <person name="de Araujo M.F.F."/>
            <person name="Astolfi-Filho S."/>
            <person name="Azevedo V."/>
            <person name="Baptista A.J."/>
            <person name="Bataus L.A.M."/>
            <person name="Batista J.S."/>
            <person name="Belo A."/>
            <person name="van den Berg C."/>
            <person name="Bogo M."/>
            <person name="Bonatto S."/>
            <person name="Bordignon J."/>
            <person name="Brigido M.M."/>
            <person name="Brito C.A."/>
            <person name="Brocchi M."/>
            <person name="Burity H.A."/>
            <person name="Camargo A.A."/>
            <person name="Cardoso D.D.P."/>
            <person name="Carneiro N.P."/>
            <person name="Carraro D.M."/>
            <person name="Carvalho C.M.B."/>
            <person name="Cascardo J.C.M."/>
            <person name="Cavada B.S."/>
            <person name="Chueire L.M.O."/>
            <person name="Creczynski-Pasa T.B."/>
            <person name="Cunha-Junior N.C."/>
            <person name="Fagundes N."/>
            <person name="Falcao C.L."/>
            <person name="Fantinatti F."/>
            <person name="Farias I.P."/>
            <person name="Felipe M.S.S."/>
            <person name="Ferrari L.P."/>
            <person name="Ferro J.A."/>
            <person name="Ferro M.I.T."/>
            <person name="Franco G.R."/>
            <person name="Freitas N.S.A."/>
            <person name="Furlan L.R."/>
            <person name="Gazzinelli R.T."/>
            <person name="Gomes E.A."/>
            <person name="Goncalves P.R."/>
            <person name="Grangeiro T.B."/>
            <person name="Grattapaglia D."/>
            <person name="Grisard E.C."/>
            <person name="Hanna E.S."/>
            <person name="Jardim S.N."/>
            <person name="Laurino J."/>
            <person name="Leoi L.C.T."/>
            <person name="Lima L.F.A."/>
            <person name="Loureiro M.F."/>
            <person name="Lyra M.C.C.P."/>
            <person name="Madeira H.M.F."/>
            <person name="Manfio G.P."/>
            <person name="Maranhao A.Q."/>
            <person name="Martins W.S."/>
            <person name="di Mauro S.M.Z."/>
            <person name="de Medeiros S.R.B."/>
            <person name="Meissner R.V."/>
            <person name="Moreira M.A.M."/>
            <person name="Nascimento F.F."/>
            <person name="Nicolas M.F."/>
            <person name="Oliveira J.G."/>
            <person name="Oliveira S.C."/>
            <person name="Paixao R.F.C."/>
            <person name="Parente J.A."/>
            <person name="Pedrosa F.O."/>
            <person name="Pena S.D.J."/>
            <person name="Pereira J.O."/>
            <person name="Pereira M."/>
            <person name="Pinto L.S.R.C."/>
            <person name="Pinto L.S."/>
            <person name="Porto J.I.R."/>
            <person name="Potrich D.P."/>
            <person name="Ramalho-Neto C.E."/>
            <person name="Reis A.M.M."/>
            <person name="Rigo L.U."/>
            <person name="Rondinelli E."/>
            <person name="Santos E.B.P."/>
            <person name="Santos F.R."/>
            <person name="Schneider M.P.C."/>
            <person name="Seuanez H.N."/>
            <person name="Silva A.M.R."/>
            <person name="da Silva A.L.C."/>
            <person name="Silva D.W."/>
            <person name="Silva R."/>
            <person name="Simoes I.C."/>
            <person name="Simon D."/>
            <person name="Soares C.M.A."/>
            <person name="Soares R.B.A."/>
            <person name="Souza E.M."/>
            <person name="Souza K.R.L."/>
            <person name="Souza R.C."/>
            <person name="Steffens M.B.R."/>
            <person name="Steindel M."/>
            <person name="Teixeira S.R."/>
            <person name="Urmenyi T."/>
            <person name="Vettore A."/>
            <person name="Wassem R."/>
            <person name="Zaha A."/>
            <person name="Simpson A.J.G."/>
        </authorList>
    </citation>
    <scope>NUCLEOTIDE SEQUENCE [LARGE SCALE GENOMIC DNA]</scope>
    <source>
        <strain>ATCC 12472 / DSM 30191 / JCM 1249 / CCUG 213 / NBRC 12614 / NCIMB 9131 / NCTC 9757 / MK</strain>
    </source>
</reference>
<name>NUOK_CHRVO</name>
<comment type="function">
    <text evidence="1">NDH-1 shuttles electrons from NADH, via FMN and iron-sulfur (Fe-S) centers, to quinones in the respiratory chain. The immediate electron acceptor for the enzyme in this species is believed to be ubiquinone. Couples the redox reaction to proton translocation (for every two electrons transferred, four hydrogen ions are translocated across the cytoplasmic membrane), and thus conserves the redox energy in a proton gradient.</text>
</comment>
<comment type="catalytic activity">
    <reaction evidence="1">
        <text>a quinone + NADH + 5 H(+)(in) = a quinol + NAD(+) + 4 H(+)(out)</text>
        <dbReference type="Rhea" id="RHEA:57888"/>
        <dbReference type="ChEBI" id="CHEBI:15378"/>
        <dbReference type="ChEBI" id="CHEBI:24646"/>
        <dbReference type="ChEBI" id="CHEBI:57540"/>
        <dbReference type="ChEBI" id="CHEBI:57945"/>
        <dbReference type="ChEBI" id="CHEBI:132124"/>
    </reaction>
</comment>
<comment type="subunit">
    <text evidence="1">NDH-1 is composed of 14 different subunits. Subunits NuoA, H, J, K, L, M, N constitute the membrane sector of the complex.</text>
</comment>
<comment type="subcellular location">
    <subcellularLocation>
        <location evidence="1">Cell inner membrane</location>
        <topology evidence="1">Multi-pass membrane protein</topology>
    </subcellularLocation>
</comment>
<comment type="similarity">
    <text evidence="1">Belongs to the complex I subunit 4L family.</text>
</comment>
<feature type="chain" id="PRO_0000390015" description="NADH-quinone oxidoreductase subunit K">
    <location>
        <begin position="1"/>
        <end position="101"/>
    </location>
</feature>
<feature type="transmembrane region" description="Helical" evidence="1">
    <location>
        <begin position="4"/>
        <end position="24"/>
    </location>
</feature>
<feature type="transmembrane region" description="Helical" evidence="1">
    <location>
        <begin position="30"/>
        <end position="50"/>
    </location>
</feature>
<feature type="transmembrane region" description="Helical" evidence="1">
    <location>
        <begin position="61"/>
        <end position="81"/>
    </location>
</feature>
<protein>
    <recommendedName>
        <fullName evidence="1">NADH-quinone oxidoreductase subunit K</fullName>
        <ecNumber evidence="1">7.1.1.-</ecNumber>
    </recommendedName>
    <alternativeName>
        <fullName evidence="1">NADH dehydrogenase I subunit K</fullName>
    </alternativeName>
    <alternativeName>
        <fullName evidence="1">NDH-1 subunit K</fullName>
    </alternativeName>
</protein>
<organism>
    <name type="scientific">Chromobacterium violaceum (strain ATCC 12472 / DSM 30191 / JCM 1249 / CCUG 213 / NBRC 12614 / NCIMB 9131 / NCTC 9757 / MK)</name>
    <dbReference type="NCBI Taxonomy" id="243365"/>
    <lineage>
        <taxon>Bacteria</taxon>
        <taxon>Pseudomonadati</taxon>
        <taxon>Pseudomonadota</taxon>
        <taxon>Betaproteobacteria</taxon>
        <taxon>Neisseriales</taxon>
        <taxon>Chromobacteriaceae</taxon>
        <taxon>Chromobacterium</taxon>
    </lineage>
</organism>
<keyword id="KW-0997">Cell inner membrane</keyword>
<keyword id="KW-1003">Cell membrane</keyword>
<keyword id="KW-0472">Membrane</keyword>
<keyword id="KW-0520">NAD</keyword>
<keyword id="KW-0874">Quinone</keyword>
<keyword id="KW-1185">Reference proteome</keyword>
<keyword id="KW-1278">Translocase</keyword>
<keyword id="KW-0812">Transmembrane</keyword>
<keyword id="KW-1133">Transmembrane helix</keyword>
<keyword id="KW-0813">Transport</keyword>
<keyword id="KW-0830">Ubiquinone</keyword>
<dbReference type="EC" id="7.1.1.-" evidence="1"/>
<dbReference type="EMBL" id="AE016825">
    <property type="protein sequence ID" value="AAQ58625.1"/>
    <property type="molecule type" value="Genomic_DNA"/>
</dbReference>
<dbReference type="RefSeq" id="WP_011134506.1">
    <property type="nucleotide sequence ID" value="NC_005085.1"/>
</dbReference>
<dbReference type="SMR" id="Q7NZH1"/>
<dbReference type="STRING" id="243365.CV_0951"/>
<dbReference type="GeneID" id="97476231"/>
<dbReference type="KEGG" id="cvi:CV_0951"/>
<dbReference type="eggNOG" id="COG0713">
    <property type="taxonomic scope" value="Bacteria"/>
</dbReference>
<dbReference type="HOGENOM" id="CLU_144724_2_0_4"/>
<dbReference type="OrthoDB" id="9801357at2"/>
<dbReference type="Proteomes" id="UP000001424">
    <property type="component" value="Chromosome"/>
</dbReference>
<dbReference type="GO" id="GO:0030964">
    <property type="term" value="C:NADH dehydrogenase complex"/>
    <property type="evidence" value="ECO:0007669"/>
    <property type="project" value="TreeGrafter"/>
</dbReference>
<dbReference type="GO" id="GO:0005886">
    <property type="term" value="C:plasma membrane"/>
    <property type="evidence" value="ECO:0007669"/>
    <property type="project" value="UniProtKB-SubCell"/>
</dbReference>
<dbReference type="GO" id="GO:0050136">
    <property type="term" value="F:NADH:ubiquinone reductase (non-electrogenic) activity"/>
    <property type="evidence" value="ECO:0007669"/>
    <property type="project" value="UniProtKB-UniRule"/>
</dbReference>
<dbReference type="GO" id="GO:0048038">
    <property type="term" value="F:quinone binding"/>
    <property type="evidence" value="ECO:0007669"/>
    <property type="project" value="UniProtKB-KW"/>
</dbReference>
<dbReference type="GO" id="GO:0042773">
    <property type="term" value="P:ATP synthesis coupled electron transport"/>
    <property type="evidence" value="ECO:0007669"/>
    <property type="project" value="InterPro"/>
</dbReference>
<dbReference type="FunFam" id="1.10.287.3510:FF:000001">
    <property type="entry name" value="NADH-quinone oxidoreductase subunit K"/>
    <property type="match status" value="1"/>
</dbReference>
<dbReference type="Gene3D" id="1.10.287.3510">
    <property type="match status" value="1"/>
</dbReference>
<dbReference type="HAMAP" id="MF_01456">
    <property type="entry name" value="NDH1_NuoK"/>
    <property type="match status" value="1"/>
</dbReference>
<dbReference type="InterPro" id="IPR001133">
    <property type="entry name" value="NADH_UbQ_OxRdtase_chain4L/K"/>
</dbReference>
<dbReference type="InterPro" id="IPR039428">
    <property type="entry name" value="NUOK/Mnh_C1-like"/>
</dbReference>
<dbReference type="NCBIfam" id="NF004320">
    <property type="entry name" value="PRK05715.1-2"/>
    <property type="match status" value="1"/>
</dbReference>
<dbReference type="NCBIfam" id="NF004321">
    <property type="entry name" value="PRK05715.1-3"/>
    <property type="match status" value="1"/>
</dbReference>
<dbReference type="NCBIfam" id="NF004323">
    <property type="entry name" value="PRK05715.1-5"/>
    <property type="match status" value="1"/>
</dbReference>
<dbReference type="PANTHER" id="PTHR11434:SF21">
    <property type="entry name" value="NADH DEHYDROGENASE SUBUNIT 4L-RELATED"/>
    <property type="match status" value="1"/>
</dbReference>
<dbReference type="PANTHER" id="PTHR11434">
    <property type="entry name" value="NADH-UBIQUINONE OXIDOREDUCTASE SUBUNIT ND4L"/>
    <property type="match status" value="1"/>
</dbReference>
<dbReference type="Pfam" id="PF00420">
    <property type="entry name" value="Oxidored_q2"/>
    <property type="match status" value="1"/>
</dbReference>
<sequence>MLTLTHFLVLAAILFAISVLGIFLNRKNLIILLMAIELMLLAVNFNFIAFSHYLSDSAGQIFVFFILTVAAAESAIGLAILVVLFRNLQSINVEDLGSLKG</sequence>
<evidence type="ECO:0000255" key="1">
    <source>
        <dbReference type="HAMAP-Rule" id="MF_01456"/>
    </source>
</evidence>
<proteinExistence type="inferred from homology"/>
<gene>
    <name evidence="1" type="primary">nuoK</name>
    <name type="ordered locus">CV_0951</name>
</gene>
<accession>Q7NZH1</accession>